<gene>
    <name evidence="1" type="primary">mnmA</name>
    <name type="synonym">trmU</name>
    <name type="ordered locus">stu2003</name>
</gene>
<name>MNMA_STRT2</name>
<evidence type="ECO:0000255" key="1">
    <source>
        <dbReference type="HAMAP-Rule" id="MF_00144"/>
    </source>
</evidence>
<keyword id="KW-0067">ATP-binding</keyword>
<keyword id="KW-0963">Cytoplasm</keyword>
<keyword id="KW-1015">Disulfide bond</keyword>
<keyword id="KW-0547">Nucleotide-binding</keyword>
<keyword id="KW-1185">Reference proteome</keyword>
<keyword id="KW-0694">RNA-binding</keyword>
<keyword id="KW-0808">Transferase</keyword>
<keyword id="KW-0819">tRNA processing</keyword>
<keyword id="KW-0820">tRNA-binding</keyword>
<accession>Q5M249</accession>
<sequence>MTDNSKTRVVVGMSGGVDSSVTALLLKEQGYDVIGVFMKNWDDTDEFGVCTATEDYKDVAAVADQIDIPYYSVNFEKEYWDRVFEYFLAEYRAGRTPNPDVMCNKEIKFKAFLDYAMTLGADYVATGHYAQVVRDEDGIVHMLRGADNNKDQTYFLSQLSQEQLQKTMFPLGHLQKPEVREIAERAGLATAKKKDSTGICFIGEKNFKEFLSQYLPAQKGRMMTIDGRDMGEHNGLMYYTIGQRGGMGIGGQKGGDNAPWFVVGKDLSKNILYVGQGFHHESLMSTSLDASMIHFTRDMPEEFEMECTAKFRYRQPDSKVTVKVKGDKSEVIFAEPQRAITPGQAVVFYDGQECLGGGIIDQAYKDGKVCQYI</sequence>
<protein>
    <recommendedName>
        <fullName evidence="1">tRNA-specific 2-thiouridylase MnmA</fullName>
        <ecNumber evidence="1">2.8.1.13</ecNumber>
    </recommendedName>
</protein>
<feature type="chain" id="PRO_1000009590" description="tRNA-specific 2-thiouridylase MnmA">
    <location>
        <begin position="1"/>
        <end position="373"/>
    </location>
</feature>
<feature type="region of interest" description="Interaction with target base in tRNA" evidence="1">
    <location>
        <begin position="98"/>
        <end position="100"/>
    </location>
</feature>
<feature type="region of interest" description="Interaction with tRNA" evidence="1">
    <location>
        <begin position="150"/>
        <end position="152"/>
    </location>
</feature>
<feature type="region of interest" description="Interaction with tRNA" evidence="1">
    <location>
        <begin position="312"/>
        <end position="313"/>
    </location>
</feature>
<feature type="active site" description="Nucleophile" evidence="1">
    <location>
        <position position="103"/>
    </location>
</feature>
<feature type="active site" description="Cysteine persulfide intermediate" evidence="1">
    <location>
        <position position="200"/>
    </location>
</feature>
<feature type="binding site" evidence="1">
    <location>
        <begin position="12"/>
        <end position="19"/>
    </location>
    <ligand>
        <name>ATP</name>
        <dbReference type="ChEBI" id="CHEBI:30616"/>
    </ligand>
</feature>
<feature type="binding site" evidence="1">
    <location>
        <position position="38"/>
    </location>
    <ligand>
        <name>ATP</name>
        <dbReference type="ChEBI" id="CHEBI:30616"/>
    </ligand>
</feature>
<feature type="binding site" evidence="1">
    <location>
        <position position="127"/>
    </location>
    <ligand>
        <name>ATP</name>
        <dbReference type="ChEBI" id="CHEBI:30616"/>
    </ligand>
</feature>
<feature type="site" description="Interaction with tRNA" evidence="1">
    <location>
        <position position="128"/>
    </location>
</feature>
<feature type="site" description="Interaction with tRNA" evidence="1">
    <location>
        <position position="344"/>
    </location>
</feature>
<feature type="disulfide bond" description="Alternate" evidence="1">
    <location>
        <begin position="103"/>
        <end position="200"/>
    </location>
</feature>
<comment type="function">
    <text evidence="1">Catalyzes the 2-thiolation of uridine at the wobble position (U34) of tRNA, leading to the formation of s(2)U34.</text>
</comment>
<comment type="catalytic activity">
    <reaction evidence="1">
        <text>S-sulfanyl-L-cysteinyl-[protein] + uridine(34) in tRNA + AH2 + ATP = 2-thiouridine(34) in tRNA + L-cysteinyl-[protein] + A + AMP + diphosphate + H(+)</text>
        <dbReference type="Rhea" id="RHEA:47032"/>
        <dbReference type="Rhea" id="RHEA-COMP:10131"/>
        <dbReference type="Rhea" id="RHEA-COMP:11726"/>
        <dbReference type="Rhea" id="RHEA-COMP:11727"/>
        <dbReference type="Rhea" id="RHEA-COMP:11728"/>
        <dbReference type="ChEBI" id="CHEBI:13193"/>
        <dbReference type="ChEBI" id="CHEBI:15378"/>
        <dbReference type="ChEBI" id="CHEBI:17499"/>
        <dbReference type="ChEBI" id="CHEBI:29950"/>
        <dbReference type="ChEBI" id="CHEBI:30616"/>
        <dbReference type="ChEBI" id="CHEBI:33019"/>
        <dbReference type="ChEBI" id="CHEBI:61963"/>
        <dbReference type="ChEBI" id="CHEBI:65315"/>
        <dbReference type="ChEBI" id="CHEBI:87170"/>
        <dbReference type="ChEBI" id="CHEBI:456215"/>
        <dbReference type="EC" id="2.8.1.13"/>
    </reaction>
</comment>
<comment type="subcellular location">
    <subcellularLocation>
        <location evidence="1">Cytoplasm</location>
    </subcellularLocation>
</comment>
<comment type="similarity">
    <text evidence="1">Belongs to the MnmA/TRMU family.</text>
</comment>
<organism>
    <name type="scientific">Streptococcus thermophilus (strain ATCC BAA-250 / LMG 18311)</name>
    <dbReference type="NCBI Taxonomy" id="264199"/>
    <lineage>
        <taxon>Bacteria</taxon>
        <taxon>Bacillati</taxon>
        <taxon>Bacillota</taxon>
        <taxon>Bacilli</taxon>
        <taxon>Lactobacillales</taxon>
        <taxon>Streptococcaceae</taxon>
        <taxon>Streptococcus</taxon>
    </lineage>
</organism>
<reference key="1">
    <citation type="journal article" date="2004" name="Nat. Biotechnol.">
        <title>Complete sequence and comparative genome analysis of the dairy bacterium Streptococcus thermophilus.</title>
        <authorList>
            <person name="Bolotin A."/>
            <person name="Quinquis B."/>
            <person name="Renault P."/>
            <person name="Sorokin A."/>
            <person name="Ehrlich S.D."/>
            <person name="Kulakauskas S."/>
            <person name="Lapidus A."/>
            <person name="Goltsman E."/>
            <person name="Mazur M."/>
            <person name="Pusch G.D."/>
            <person name="Fonstein M."/>
            <person name="Overbeek R."/>
            <person name="Kyprides N."/>
            <person name="Purnelle B."/>
            <person name="Prozzi D."/>
            <person name="Ngui K."/>
            <person name="Masuy D."/>
            <person name="Hancy F."/>
            <person name="Burteau S."/>
            <person name="Boutry M."/>
            <person name="Delcour J."/>
            <person name="Goffeau A."/>
            <person name="Hols P."/>
        </authorList>
    </citation>
    <scope>NUCLEOTIDE SEQUENCE [LARGE SCALE GENOMIC DNA]</scope>
    <source>
        <strain>ATCC BAA-250 / LMG 18311</strain>
    </source>
</reference>
<dbReference type="EC" id="2.8.1.13" evidence="1"/>
<dbReference type="EMBL" id="CP000023">
    <property type="protein sequence ID" value="AAV61597.1"/>
    <property type="molecule type" value="Genomic_DNA"/>
</dbReference>
<dbReference type="RefSeq" id="WP_011226698.1">
    <property type="nucleotide sequence ID" value="NC_006448.1"/>
</dbReference>
<dbReference type="SMR" id="Q5M249"/>
<dbReference type="STRING" id="264199.stu2003"/>
<dbReference type="GeneID" id="66899729"/>
<dbReference type="KEGG" id="stl:stu2003"/>
<dbReference type="eggNOG" id="COG0482">
    <property type="taxonomic scope" value="Bacteria"/>
</dbReference>
<dbReference type="HOGENOM" id="CLU_035188_1_0_9"/>
<dbReference type="Proteomes" id="UP000001170">
    <property type="component" value="Chromosome"/>
</dbReference>
<dbReference type="GO" id="GO:0005737">
    <property type="term" value="C:cytoplasm"/>
    <property type="evidence" value="ECO:0007669"/>
    <property type="project" value="UniProtKB-SubCell"/>
</dbReference>
<dbReference type="GO" id="GO:0005524">
    <property type="term" value="F:ATP binding"/>
    <property type="evidence" value="ECO:0007669"/>
    <property type="project" value="UniProtKB-KW"/>
</dbReference>
<dbReference type="GO" id="GO:0000049">
    <property type="term" value="F:tRNA binding"/>
    <property type="evidence" value="ECO:0007669"/>
    <property type="project" value="UniProtKB-KW"/>
</dbReference>
<dbReference type="GO" id="GO:0103016">
    <property type="term" value="F:tRNA-uridine 2-sulfurtransferase activity"/>
    <property type="evidence" value="ECO:0007669"/>
    <property type="project" value="UniProtKB-EC"/>
</dbReference>
<dbReference type="GO" id="GO:0002143">
    <property type="term" value="P:tRNA wobble position uridine thiolation"/>
    <property type="evidence" value="ECO:0007669"/>
    <property type="project" value="TreeGrafter"/>
</dbReference>
<dbReference type="CDD" id="cd01998">
    <property type="entry name" value="MnmA_TRMU-like"/>
    <property type="match status" value="1"/>
</dbReference>
<dbReference type="FunFam" id="2.30.30.280:FF:000001">
    <property type="entry name" value="tRNA-specific 2-thiouridylase MnmA"/>
    <property type="match status" value="1"/>
</dbReference>
<dbReference type="FunFam" id="2.40.30.10:FF:000023">
    <property type="entry name" value="tRNA-specific 2-thiouridylase MnmA"/>
    <property type="match status" value="1"/>
</dbReference>
<dbReference type="FunFam" id="3.40.50.620:FF:000004">
    <property type="entry name" value="tRNA-specific 2-thiouridylase MnmA"/>
    <property type="match status" value="1"/>
</dbReference>
<dbReference type="Gene3D" id="2.30.30.280">
    <property type="entry name" value="Adenine nucleotide alpha hydrolases-like domains"/>
    <property type="match status" value="1"/>
</dbReference>
<dbReference type="Gene3D" id="3.40.50.620">
    <property type="entry name" value="HUPs"/>
    <property type="match status" value="1"/>
</dbReference>
<dbReference type="Gene3D" id="2.40.30.10">
    <property type="entry name" value="Translation factors"/>
    <property type="match status" value="1"/>
</dbReference>
<dbReference type="HAMAP" id="MF_00144">
    <property type="entry name" value="tRNA_thiouridyl_MnmA"/>
    <property type="match status" value="1"/>
</dbReference>
<dbReference type="InterPro" id="IPR004506">
    <property type="entry name" value="MnmA-like"/>
</dbReference>
<dbReference type="InterPro" id="IPR046885">
    <property type="entry name" value="MnmA-like_C"/>
</dbReference>
<dbReference type="InterPro" id="IPR046884">
    <property type="entry name" value="MnmA-like_central"/>
</dbReference>
<dbReference type="InterPro" id="IPR023382">
    <property type="entry name" value="MnmA-like_central_sf"/>
</dbReference>
<dbReference type="InterPro" id="IPR014729">
    <property type="entry name" value="Rossmann-like_a/b/a_fold"/>
</dbReference>
<dbReference type="NCBIfam" id="NF001138">
    <property type="entry name" value="PRK00143.1"/>
    <property type="match status" value="1"/>
</dbReference>
<dbReference type="NCBIfam" id="TIGR00420">
    <property type="entry name" value="trmU"/>
    <property type="match status" value="1"/>
</dbReference>
<dbReference type="PANTHER" id="PTHR11933:SF5">
    <property type="entry name" value="MITOCHONDRIAL TRNA-SPECIFIC 2-THIOURIDYLASE 1"/>
    <property type="match status" value="1"/>
</dbReference>
<dbReference type="PANTHER" id="PTHR11933">
    <property type="entry name" value="TRNA 5-METHYLAMINOMETHYL-2-THIOURIDYLATE -METHYLTRANSFERASE"/>
    <property type="match status" value="1"/>
</dbReference>
<dbReference type="Pfam" id="PF03054">
    <property type="entry name" value="tRNA_Me_trans"/>
    <property type="match status" value="1"/>
</dbReference>
<dbReference type="Pfam" id="PF20258">
    <property type="entry name" value="tRNA_Me_trans_C"/>
    <property type="match status" value="1"/>
</dbReference>
<dbReference type="Pfam" id="PF20259">
    <property type="entry name" value="tRNA_Me_trans_M"/>
    <property type="match status" value="1"/>
</dbReference>
<dbReference type="SUPFAM" id="SSF52402">
    <property type="entry name" value="Adenine nucleotide alpha hydrolases-like"/>
    <property type="match status" value="1"/>
</dbReference>
<proteinExistence type="inferred from homology"/>